<organism>
    <name type="scientific">Escherichia coli O6:H1 (strain CFT073 / ATCC 700928 / UPEC)</name>
    <dbReference type="NCBI Taxonomy" id="199310"/>
    <lineage>
        <taxon>Bacteria</taxon>
        <taxon>Pseudomonadati</taxon>
        <taxon>Pseudomonadota</taxon>
        <taxon>Gammaproteobacteria</taxon>
        <taxon>Enterobacterales</taxon>
        <taxon>Enterobacteriaceae</taxon>
        <taxon>Escherichia</taxon>
    </lineage>
</organism>
<sequence length="89" mass="10269">MSLSTEATAKIVSEFGRDANDTGSTEVQVALLTAQINHLQGHFAEHKKDHHSRRGLLRMVSQRRKLLDYLKRKDVARYTQLIERLGLRR</sequence>
<proteinExistence type="inferred from homology"/>
<evidence type="ECO:0000250" key="1"/>
<evidence type="ECO:0000255" key="2">
    <source>
        <dbReference type="HAMAP-Rule" id="MF_01343"/>
    </source>
</evidence>
<evidence type="ECO:0000305" key="3"/>
<keyword id="KW-1185">Reference proteome</keyword>
<keyword id="KW-0687">Ribonucleoprotein</keyword>
<keyword id="KW-0689">Ribosomal protein</keyword>
<keyword id="KW-0694">RNA-binding</keyword>
<keyword id="KW-0699">rRNA-binding</keyword>
<name>RS15_ECOL6</name>
<gene>
    <name evidence="2" type="primary">rpsO</name>
    <name type="ordered locus">c3921</name>
</gene>
<protein>
    <recommendedName>
        <fullName evidence="2">Small ribosomal subunit protein uS15</fullName>
    </recommendedName>
    <alternativeName>
        <fullName evidence="3">30S ribosomal protein S15</fullName>
    </alternativeName>
</protein>
<reference key="1">
    <citation type="journal article" date="2002" name="Proc. Natl. Acad. Sci. U.S.A.">
        <title>Extensive mosaic structure revealed by the complete genome sequence of uropathogenic Escherichia coli.</title>
        <authorList>
            <person name="Welch R.A."/>
            <person name="Burland V."/>
            <person name="Plunkett G. III"/>
            <person name="Redford P."/>
            <person name="Roesch P."/>
            <person name="Rasko D."/>
            <person name="Buckles E.L."/>
            <person name="Liou S.-R."/>
            <person name="Boutin A."/>
            <person name="Hackett J."/>
            <person name="Stroud D."/>
            <person name="Mayhew G.F."/>
            <person name="Rose D.J."/>
            <person name="Zhou S."/>
            <person name="Schwartz D.C."/>
            <person name="Perna N.T."/>
            <person name="Mobley H.L.T."/>
            <person name="Donnenberg M.S."/>
            <person name="Blattner F.R."/>
        </authorList>
    </citation>
    <scope>NUCLEOTIDE SEQUENCE [LARGE SCALE GENOMIC DNA]</scope>
    <source>
        <strain>CFT073 / ATCC 700928 / UPEC</strain>
    </source>
</reference>
<accession>P0ADZ5</accession>
<accession>P02371</accession>
<feature type="initiator methionine" description="Removed" evidence="1">
    <location>
        <position position="1"/>
    </location>
</feature>
<feature type="chain" id="PRO_0000115439" description="Small ribosomal subunit protein uS15">
    <location>
        <begin position="2"/>
        <end position="89"/>
    </location>
</feature>
<dbReference type="EMBL" id="AE014075">
    <property type="protein sequence ID" value="AAN82362.1"/>
    <property type="molecule type" value="Genomic_DNA"/>
</dbReference>
<dbReference type="RefSeq" id="WP_000059466.1">
    <property type="nucleotide sequence ID" value="NZ_CP051263.1"/>
</dbReference>
<dbReference type="SMR" id="P0ADZ5"/>
<dbReference type="STRING" id="199310.c3921"/>
<dbReference type="GeneID" id="93778818"/>
<dbReference type="KEGG" id="ecc:c3921"/>
<dbReference type="eggNOG" id="COG0184">
    <property type="taxonomic scope" value="Bacteria"/>
</dbReference>
<dbReference type="HOGENOM" id="CLU_148518_0_0_6"/>
<dbReference type="BioCyc" id="ECOL199310:C3921-MONOMER"/>
<dbReference type="Proteomes" id="UP000001410">
    <property type="component" value="Chromosome"/>
</dbReference>
<dbReference type="GO" id="GO:0022627">
    <property type="term" value="C:cytosolic small ribosomal subunit"/>
    <property type="evidence" value="ECO:0007669"/>
    <property type="project" value="TreeGrafter"/>
</dbReference>
<dbReference type="GO" id="GO:0019843">
    <property type="term" value="F:rRNA binding"/>
    <property type="evidence" value="ECO:0007669"/>
    <property type="project" value="UniProtKB-UniRule"/>
</dbReference>
<dbReference type="GO" id="GO:0003735">
    <property type="term" value="F:structural constituent of ribosome"/>
    <property type="evidence" value="ECO:0007669"/>
    <property type="project" value="InterPro"/>
</dbReference>
<dbReference type="GO" id="GO:0006412">
    <property type="term" value="P:translation"/>
    <property type="evidence" value="ECO:0007669"/>
    <property type="project" value="UniProtKB-UniRule"/>
</dbReference>
<dbReference type="CDD" id="cd00353">
    <property type="entry name" value="Ribosomal_S15p_S13e"/>
    <property type="match status" value="1"/>
</dbReference>
<dbReference type="FunFam" id="1.10.287.10:FF:000002">
    <property type="entry name" value="30S ribosomal protein S15"/>
    <property type="match status" value="1"/>
</dbReference>
<dbReference type="Gene3D" id="6.10.250.3130">
    <property type="match status" value="1"/>
</dbReference>
<dbReference type="Gene3D" id="1.10.287.10">
    <property type="entry name" value="S15/NS1, RNA-binding"/>
    <property type="match status" value="1"/>
</dbReference>
<dbReference type="HAMAP" id="MF_01343_B">
    <property type="entry name" value="Ribosomal_uS15_B"/>
    <property type="match status" value="1"/>
</dbReference>
<dbReference type="InterPro" id="IPR000589">
    <property type="entry name" value="Ribosomal_uS15"/>
</dbReference>
<dbReference type="InterPro" id="IPR005290">
    <property type="entry name" value="Ribosomal_uS15_bac-type"/>
</dbReference>
<dbReference type="InterPro" id="IPR009068">
    <property type="entry name" value="uS15_NS1_RNA-bd_sf"/>
</dbReference>
<dbReference type="NCBIfam" id="TIGR00952">
    <property type="entry name" value="S15_bact"/>
    <property type="match status" value="1"/>
</dbReference>
<dbReference type="PANTHER" id="PTHR23321">
    <property type="entry name" value="RIBOSOMAL PROTEIN S15, BACTERIAL AND ORGANELLAR"/>
    <property type="match status" value="1"/>
</dbReference>
<dbReference type="PANTHER" id="PTHR23321:SF26">
    <property type="entry name" value="SMALL RIBOSOMAL SUBUNIT PROTEIN US15M"/>
    <property type="match status" value="1"/>
</dbReference>
<dbReference type="Pfam" id="PF00312">
    <property type="entry name" value="Ribosomal_S15"/>
    <property type="match status" value="1"/>
</dbReference>
<dbReference type="SMART" id="SM01387">
    <property type="entry name" value="Ribosomal_S15"/>
    <property type="match status" value="1"/>
</dbReference>
<dbReference type="SUPFAM" id="SSF47060">
    <property type="entry name" value="S15/NS1 RNA-binding domain"/>
    <property type="match status" value="1"/>
</dbReference>
<dbReference type="PROSITE" id="PS00362">
    <property type="entry name" value="RIBOSOMAL_S15"/>
    <property type="match status" value="1"/>
</dbReference>
<comment type="function">
    <text evidence="2">One of the primary rRNA binding proteins, it binds directly to 16S rRNA where it helps nucleate assembly of the platform of the 30S subunit by binding and bridging several RNA helices of the 16S rRNA.</text>
</comment>
<comment type="function">
    <text evidence="2">Forms an intersubunit bridge (bridge B4) with the 23S rRNA of the 50S subunit in the ribosome.</text>
</comment>
<comment type="subunit">
    <text evidence="2">Part of the 30S ribosomal subunit. Forms a bridge to the 50S subunit in the 70S ribosome, contacting the 23S rRNA.</text>
</comment>
<comment type="similarity">
    <text evidence="2">Belongs to the universal ribosomal protein uS15 family.</text>
</comment>